<protein>
    <recommendedName>
        <fullName>Heat shock factor-binding protein 1</fullName>
    </recommendedName>
</protein>
<keyword id="KW-0539">Nucleus</keyword>
<keyword id="KW-1185">Reference proteome</keyword>
<proteinExistence type="inferred from homology"/>
<dbReference type="EMBL" id="CR857927">
    <property type="protein sequence ID" value="CAH90175.1"/>
    <property type="molecule type" value="mRNA"/>
</dbReference>
<dbReference type="RefSeq" id="NP_001125059.1">
    <property type="nucleotide sequence ID" value="NM_001131587.1"/>
</dbReference>
<dbReference type="SMR" id="Q5RDI2"/>
<dbReference type="FunCoup" id="Q5RDI2">
    <property type="interactions" value="2335"/>
</dbReference>
<dbReference type="STRING" id="9601.ENSPPYP00000008675"/>
<dbReference type="Ensembl" id="ENSPPYT00000042244.1">
    <property type="protein sequence ID" value="ENSPPYP00000041031.1"/>
    <property type="gene ID" value="ENSPPYG00000041045.1"/>
</dbReference>
<dbReference type="GeneID" id="100171940"/>
<dbReference type="KEGG" id="pon:100171940"/>
<dbReference type="CTD" id="3281"/>
<dbReference type="eggNOG" id="KOG4117">
    <property type="taxonomic scope" value="Eukaryota"/>
</dbReference>
<dbReference type="GeneTree" id="ENSGT00390000006293"/>
<dbReference type="InParanoid" id="Q5RDI2"/>
<dbReference type="OMA" id="MERANMD"/>
<dbReference type="OrthoDB" id="4159489at2759"/>
<dbReference type="Proteomes" id="UP000001595">
    <property type="component" value="Chromosome 16"/>
</dbReference>
<dbReference type="GO" id="GO:1904115">
    <property type="term" value="C:axon cytoplasm"/>
    <property type="evidence" value="ECO:0007669"/>
    <property type="project" value="GOC"/>
</dbReference>
<dbReference type="GO" id="GO:0005829">
    <property type="term" value="C:cytosol"/>
    <property type="evidence" value="ECO:0007669"/>
    <property type="project" value="TreeGrafter"/>
</dbReference>
<dbReference type="GO" id="GO:0005634">
    <property type="term" value="C:nucleus"/>
    <property type="evidence" value="ECO:0007669"/>
    <property type="project" value="UniProtKB-SubCell"/>
</dbReference>
<dbReference type="GO" id="GO:0042802">
    <property type="term" value="F:identical protein binding"/>
    <property type="evidence" value="ECO:0007669"/>
    <property type="project" value="Ensembl"/>
</dbReference>
<dbReference type="GO" id="GO:0003714">
    <property type="term" value="F:transcription corepressor activity"/>
    <property type="evidence" value="ECO:0007669"/>
    <property type="project" value="InterPro"/>
</dbReference>
<dbReference type="GO" id="GO:0019896">
    <property type="term" value="P:axonal transport of mitochondrion"/>
    <property type="evidence" value="ECO:0007669"/>
    <property type="project" value="Ensembl"/>
</dbReference>
<dbReference type="GO" id="GO:0070370">
    <property type="term" value="P:cellular heat acclimation"/>
    <property type="evidence" value="ECO:0007669"/>
    <property type="project" value="TreeGrafter"/>
</dbReference>
<dbReference type="FunFam" id="1.20.5.430:FF:000002">
    <property type="entry name" value="Heat shock factor-binding protein 1"/>
    <property type="match status" value="1"/>
</dbReference>
<dbReference type="Gene3D" id="1.20.5.430">
    <property type="match status" value="1"/>
</dbReference>
<dbReference type="InterPro" id="IPR009643">
    <property type="entry name" value="HS1-bd"/>
</dbReference>
<dbReference type="PANTHER" id="PTHR19424">
    <property type="entry name" value="HEAT SHOCK FACTOR BINDING PROTEIN 1"/>
    <property type="match status" value="1"/>
</dbReference>
<dbReference type="PANTHER" id="PTHR19424:SF3">
    <property type="entry name" value="HEAT SHOCK FACTOR-BINDING PROTEIN 1"/>
    <property type="match status" value="1"/>
</dbReference>
<dbReference type="Pfam" id="PF06825">
    <property type="entry name" value="HSBP1"/>
    <property type="match status" value="1"/>
</dbReference>
<feature type="chain" id="PRO_0000124807" description="Heat shock factor-binding protein 1">
    <location>
        <begin position="1"/>
        <end position="76"/>
    </location>
</feature>
<gene>
    <name type="primary">HSBP1</name>
</gene>
<reference key="1">
    <citation type="submission" date="2004-11" db="EMBL/GenBank/DDBJ databases">
        <authorList>
            <consortium name="The German cDNA consortium"/>
        </authorList>
    </citation>
    <scope>NUCLEOTIDE SEQUENCE [LARGE SCALE MRNA]</scope>
    <source>
        <tissue>Brain cortex</tissue>
    </source>
</reference>
<evidence type="ECO:0000250" key="1"/>
<evidence type="ECO:0000305" key="2"/>
<accession>Q5RDI2</accession>
<comment type="function">
    <text evidence="1">Negative regulator of the heat shock response. Negatively affects HSF1 DNA-binding activity. May have a role in the suppression of the activation of the stress response during the aging process (By similarity).</text>
</comment>
<comment type="subunit">
    <text evidence="1">Homohexamer. Associates with heptad repeats of HSF1 trimers and probably also HSF1 monomers, and with HSP70. Association with HSF1 trimers and HSP70 coincides with attenuation of heat shock response and the conversion of HSF1 trimer to monomer (By similarity).</text>
</comment>
<comment type="subcellular location">
    <subcellularLocation>
        <location evidence="1">Nucleus</location>
    </subcellularLocation>
</comment>
<comment type="similarity">
    <text evidence="2">Belongs to the HSBP1 family.</text>
</comment>
<name>HSBP1_PONAB</name>
<organism>
    <name type="scientific">Pongo abelii</name>
    <name type="common">Sumatran orangutan</name>
    <name type="synonym">Pongo pygmaeus abelii</name>
    <dbReference type="NCBI Taxonomy" id="9601"/>
    <lineage>
        <taxon>Eukaryota</taxon>
        <taxon>Metazoa</taxon>
        <taxon>Chordata</taxon>
        <taxon>Craniata</taxon>
        <taxon>Vertebrata</taxon>
        <taxon>Euteleostomi</taxon>
        <taxon>Mammalia</taxon>
        <taxon>Eutheria</taxon>
        <taxon>Euarchontoglires</taxon>
        <taxon>Primates</taxon>
        <taxon>Haplorrhini</taxon>
        <taxon>Catarrhini</taxon>
        <taxon>Hominidae</taxon>
        <taxon>Pongo</taxon>
    </lineage>
</organism>
<sequence length="76" mass="8514">MAETDPKTVQDLTSVVQTLLQQMQDKFQTMSDQIIGRIDDMSSRIDDLEKNIADLMTQAGVEELEGENKIPATQKS</sequence>